<evidence type="ECO:0000250" key="1">
    <source>
        <dbReference type="UniProtKB" id="P45779"/>
    </source>
</evidence>
<evidence type="ECO:0000269" key="2">
    <source>
    </source>
</evidence>
<evidence type="ECO:0000305" key="3"/>
<name>GSPD_KLEPN</name>
<organism>
    <name type="scientific">Klebsiella pneumoniae</name>
    <dbReference type="NCBI Taxonomy" id="573"/>
    <lineage>
        <taxon>Bacteria</taxon>
        <taxon>Pseudomonadati</taxon>
        <taxon>Pseudomonadota</taxon>
        <taxon>Gammaproteobacteria</taxon>
        <taxon>Enterobacterales</taxon>
        <taxon>Enterobacteriaceae</taxon>
        <taxon>Klebsiella/Raoultella group</taxon>
        <taxon>Klebsiella</taxon>
        <taxon>Klebsiella pneumoniae complex</taxon>
    </lineage>
</organism>
<accession>P15644</accession>
<feature type="signal peptide" evidence="2">
    <location>
        <begin position="1"/>
        <end position="27"/>
    </location>
</feature>
<feature type="chain" id="PRO_0000013103" description="Secretin PulD">
    <location>
        <begin position="28"/>
        <end position="660"/>
    </location>
</feature>
<feature type="region of interest" description="N0" evidence="1">
    <location>
        <begin position="28"/>
        <end position="124"/>
    </location>
</feature>
<feature type="region of interest" description="N1" evidence="1">
    <location>
        <begin position="126"/>
        <end position="190"/>
    </location>
</feature>
<feature type="region of interest" description="N2" evidence="1">
    <location>
        <begin position="191"/>
        <end position="264"/>
    </location>
</feature>
<feature type="region of interest" description="N3" evidence="1">
    <location>
        <begin position="267"/>
        <end position="341"/>
    </location>
</feature>
<feature type="region of interest" description="Secretin" evidence="1">
    <location>
        <begin position="346"/>
        <end position="596"/>
    </location>
</feature>
<feature type="region of interest" description="S domain" evidence="1">
    <location>
        <begin position="598"/>
        <end position="660"/>
    </location>
</feature>
<feature type="site" description="May serve as a pivot that allows opening of the central gate for substrate egress" evidence="1">
    <location>
        <position position="458"/>
    </location>
</feature>
<gene>
    <name type="primary">pulD</name>
</gene>
<proteinExistence type="evidence at protein level"/>
<protein>
    <recommendedName>
        <fullName>Secretin PulD</fullName>
    </recommendedName>
    <alternativeName>
        <fullName>General secretion pathway protein D</fullName>
    </alternativeName>
    <alternativeName>
        <fullName>Pullulanase secretion envelope PulD</fullName>
    </alternativeName>
    <alternativeName>
        <fullName>Type II secretion system protein D</fullName>
        <shortName>T2SS protein D</shortName>
    </alternativeName>
</protein>
<comment type="function">
    <text evidence="1 2">Involved in a type II secretion system (T2SS, formerly general secretion pathway, GSP) for the export of proteins. Required for the translocation of pullulanase (PubMed:2677007). This subunit forms the outer membrane channel (By similarity).</text>
</comment>
<comment type="subunit">
    <text evidence="1">Forms a cylindrical channel with 15 subunits.</text>
</comment>
<comment type="interaction">
    <interactant intactId="EBI-7074093">
        <id>P15644</id>
    </interactant>
    <interactant intactId="EBI-7074093">
        <id>P15644</id>
        <label>pulD</label>
    </interactant>
    <organismsDiffer>false</organismsDiffer>
    <experiments>2</experiments>
</comment>
<comment type="subcellular location">
    <subcellularLocation>
        <location evidence="2">Cell outer membrane</location>
    </subcellularLocation>
    <text evidence="1">Most of the protein is in the periplasm which it traverses to contact proteins of the cell inner membrane.</text>
</comment>
<comment type="domain">
    <text evidence="1">The N0, N1, N2 and N3 domains are periplasmic, while the secretin and S domains form a channel that is partially inserted in the outer membrane. The N1, N2 and N3 domains each form a periplasmic ring. The secretin domain forms a double beta-barrel structure; the outer barrel has a diameter of about 110 Angstroms while the inner barrel forms the central gate with a small pore in the closed state.</text>
</comment>
<comment type="similarity">
    <text evidence="3">Belongs to the bacterial secretin family. GSP D subfamily.</text>
</comment>
<sequence>MIIANVIRSFSLTLLIFAALLFRPAAAEEFSASFKGTDIQEFINTVSKNLNKTVIIDPSVRGTITVRSYDMLNEEQYYQFFLSVLDVYGFAVINMNNGVLKVVRSKDAKTAAVPVASDAAPGIGDEVVTRVVPLTNVAARDLAPLLRQLNDNAGVGSVVHYEPSNVLLMTGRAAVIKRLLTIVERVDNAGDRSVVTVPLSWASAADVVKLVTELNKDTSKSALPGSMVANVVADERTNAVLVSGEPNSRQRIIAMIKQLDRQQATQGNTKVIYLKYAKASDLVEVLTGISSTMQSEKQAAKPVAALDKNIIIKAHGQTNALIVTAAPDVMNDLERVIAQLDIRRPQVLVEAIIAEVQDADGLNLGIQWANKNAGMTQFTNSGLPISTAIAGANQYNKDGTVSSSLASALSSFNGIAAGFYQGNWAMLLTALSSSTKNDILATPSIVTLDNMEATFNVGQEVPVLTGSQTTSGDNIFNTVERKTVGIKLKVKPQINEGDSVLLEIEQEVSSVADAASSTSSDLGATFNTRTVNNAVLVGSGETVVVGGLLDKSVSDTADKVPLLGDIPVIGALFRSTSKKVSKRNLMLFIRPTVIRDRDEYRQASSGQYTAFNDAQSKQRGKENNDAMLNQDLLEIYPRQDTAAFRQVSAAIDAFNLGGNL</sequence>
<dbReference type="EMBL" id="M32613">
    <property type="protein sequence ID" value="AAA25126.2"/>
    <property type="molecule type" value="Genomic_DNA"/>
</dbReference>
<dbReference type="PIR" id="B34469">
    <property type="entry name" value="B34469"/>
</dbReference>
<dbReference type="SMR" id="P15644"/>
<dbReference type="MINT" id="P15644"/>
<dbReference type="TCDB" id="1.B.22.1.1">
    <property type="family name" value="the outer bacterial membrane secretin (secretin) family"/>
</dbReference>
<dbReference type="GO" id="GO:0009279">
    <property type="term" value="C:cell outer membrane"/>
    <property type="evidence" value="ECO:0007669"/>
    <property type="project" value="UniProtKB-SubCell"/>
</dbReference>
<dbReference type="GO" id="GO:0015627">
    <property type="term" value="C:type II protein secretion system complex"/>
    <property type="evidence" value="ECO:0007669"/>
    <property type="project" value="InterPro"/>
</dbReference>
<dbReference type="GO" id="GO:0042802">
    <property type="term" value="F:identical protein binding"/>
    <property type="evidence" value="ECO:0000353"/>
    <property type="project" value="IntAct"/>
</dbReference>
<dbReference type="GO" id="GO:0015628">
    <property type="term" value="P:protein secretion by the type II secretion system"/>
    <property type="evidence" value="ECO:0007669"/>
    <property type="project" value="InterPro"/>
</dbReference>
<dbReference type="FunFam" id="3.30.1370.120:FF:000002">
    <property type="entry name" value="General secretion pathway protein D"/>
    <property type="match status" value="1"/>
</dbReference>
<dbReference type="Gene3D" id="3.30.1370.120">
    <property type="match status" value="3"/>
</dbReference>
<dbReference type="InterPro" id="IPR050810">
    <property type="entry name" value="Bact_Secretion_Sys_Channel"/>
</dbReference>
<dbReference type="InterPro" id="IPR049371">
    <property type="entry name" value="GspD-like_N0"/>
</dbReference>
<dbReference type="InterPro" id="IPR001775">
    <property type="entry name" value="GspD/PilQ"/>
</dbReference>
<dbReference type="InterPro" id="IPR005644">
    <property type="entry name" value="NolW-like"/>
</dbReference>
<dbReference type="InterPro" id="IPR038591">
    <property type="entry name" value="NolW-like_sf"/>
</dbReference>
<dbReference type="InterPro" id="IPR004846">
    <property type="entry name" value="T2SS/T3SS_dom"/>
</dbReference>
<dbReference type="InterPro" id="IPR013356">
    <property type="entry name" value="T2SS_GspD"/>
</dbReference>
<dbReference type="InterPro" id="IPR004845">
    <property type="entry name" value="T2SS_GspD_CS"/>
</dbReference>
<dbReference type="NCBIfam" id="TIGR02517">
    <property type="entry name" value="type_II_gspD"/>
    <property type="match status" value="1"/>
</dbReference>
<dbReference type="PANTHER" id="PTHR30332">
    <property type="entry name" value="PROBABLE GENERAL SECRETION PATHWAY PROTEIN D"/>
    <property type="match status" value="1"/>
</dbReference>
<dbReference type="PANTHER" id="PTHR30332:SF24">
    <property type="entry name" value="SECRETIN GSPD-RELATED"/>
    <property type="match status" value="1"/>
</dbReference>
<dbReference type="Pfam" id="PF00263">
    <property type="entry name" value="Secretin"/>
    <property type="match status" value="1"/>
</dbReference>
<dbReference type="Pfam" id="PF03958">
    <property type="entry name" value="Secretin_N"/>
    <property type="match status" value="3"/>
</dbReference>
<dbReference type="Pfam" id="PF21305">
    <property type="entry name" value="type_II_gspD_N0"/>
    <property type="match status" value="1"/>
</dbReference>
<dbReference type="PRINTS" id="PR00811">
    <property type="entry name" value="BCTERIALGSPD"/>
</dbReference>
<dbReference type="PROSITE" id="PS00875">
    <property type="entry name" value="T2SP_D"/>
    <property type="match status" value="1"/>
</dbReference>
<reference key="1">
    <citation type="journal article" date="1989" name="J. Biol. Chem.">
        <title>Protein secretion by Gram-negative bacteria. Characterization of two membrane proteins required for pullulanase secretion by Escherichia coli K-12.</title>
        <authorList>
            <person name="D'Enfert C."/>
            <person name="Reyss I."/>
            <person name="Wandersman C."/>
            <person name="Pugsley A.P."/>
        </authorList>
    </citation>
    <scope>NUCLEOTIDE SEQUENCE [GENOMIC DNA]</scope>
    <scope>PROTEIN SEQUENCE OF 28-42</scope>
    <scope>FUNCTION</scope>
    <scope>SUBCELLULAR LOCATION</scope>
    <source>
        <strain>UNF5023</strain>
    </source>
</reference>
<keyword id="KW-0998">Cell outer membrane</keyword>
<keyword id="KW-0903">Direct protein sequencing</keyword>
<keyword id="KW-0472">Membrane</keyword>
<keyword id="KW-0653">Protein transport</keyword>
<keyword id="KW-0732">Signal</keyword>
<keyword id="KW-0812">Transmembrane</keyword>
<keyword id="KW-1134">Transmembrane beta strand</keyword>
<keyword id="KW-0813">Transport</keyword>